<gene>
    <name type="primary">PTH3</name>
    <name type="ORF">MGG_07528</name>
</gene>
<name>HIS7_PYRO7</name>
<accession>O42621</accession>
<accession>A4RA35</accession>
<accession>G4N1R2</accession>
<comment type="catalytic activity">
    <reaction>
        <text>D-erythro-1-(imidazol-4-yl)glycerol 3-phosphate = 3-(imidazol-4-yl)-2-oxopropyl phosphate + H2O</text>
        <dbReference type="Rhea" id="RHEA:11040"/>
        <dbReference type="ChEBI" id="CHEBI:15377"/>
        <dbReference type="ChEBI" id="CHEBI:57766"/>
        <dbReference type="ChEBI" id="CHEBI:58278"/>
        <dbReference type="EC" id="4.2.1.19"/>
    </reaction>
</comment>
<comment type="pathway">
    <text>Amino-acid biosynthesis; L-histidine biosynthesis; L-histidine from 5-phospho-alpha-D-ribose 1-diphosphate: step 6/9.</text>
</comment>
<comment type="similarity">
    <text evidence="1">Belongs to the imidazoleglycerol-phosphate dehydratase family.</text>
</comment>
<comment type="sequence caution" evidence="1">
    <conflict type="frameshift">
        <sequence resource="EMBL-CDS" id="AAB88888"/>
    </conflict>
</comment>
<reference key="1">
    <citation type="journal article" date="1998" name="Mol. Plant Microbe Interact.">
        <title>Magnaporthe grisea pathogenicity genes obtained through insertional mutagenesis.</title>
        <authorList>
            <person name="Sweigard J.A."/>
            <person name="Carroll A.M."/>
            <person name="Farrall L.F."/>
            <person name="Chumley F.G."/>
            <person name="Valent B."/>
        </authorList>
    </citation>
    <scope>NUCLEOTIDE SEQUENCE [GENOMIC DNA]</scope>
    <source>
        <strain>4091-5-8</strain>
    </source>
</reference>
<reference key="2">
    <citation type="journal article" date="2005" name="Nature">
        <title>The genome sequence of the rice blast fungus Magnaporthe grisea.</title>
        <authorList>
            <person name="Dean R.A."/>
            <person name="Talbot N.J."/>
            <person name="Ebbole D.J."/>
            <person name="Farman M.L."/>
            <person name="Mitchell T.K."/>
            <person name="Orbach M.J."/>
            <person name="Thon M.R."/>
            <person name="Kulkarni R."/>
            <person name="Xu J.-R."/>
            <person name="Pan H."/>
            <person name="Read N.D."/>
            <person name="Lee Y.-H."/>
            <person name="Carbone I."/>
            <person name="Brown D."/>
            <person name="Oh Y.Y."/>
            <person name="Donofrio N."/>
            <person name="Jeong J.S."/>
            <person name="Soanes D.M."/>
            <person name="Djonovic S."/>
            <person name="Kolomiets E."/>
            <person name="Rehmeyer C."/>
            <person name="Li W."/>
            <person name="Harding M."/>
            <person name="Kim S."/>
            <person name="Lebrun M.-H."/>
            <person name="Bohnert H."/>
            <person name="Coughlan S."/>
            <person name="Butler J."/>
            <person name="Calvo S.E."/>
            <person name="Ma L.-J."/>
            <person name="Nicol R."/>
            <person name="Purcell S."/>
            <person name="Nusbaum C."/>
            <person name="Galagan J.E."/>
            <person name="Birren B.W."/>
        </authorList>
    </citation>
    <scope>NUCLEOTIDE SEQUENCE [LARGE SCALE GENOMIC DNA]</scope>
    <source>
        <strain>70-15 / ATCC MYA-4617 / FGSC 8958</strain>
    </source>
</reference>
<keyword id="KW-0028">Amino-acid biosynthesis</keyword>
<keyword id="KW-0368">Histidine biosynthesis</keyword>
<keyword id="KW-0456">Lyase</keyword>
<keyword id="KW-1185">Reference proteome</keyword>
<protein>
    <recommendedName>
        <fullName>Imidazoleglycerol-phosphate dehydratase</fullName>
        <shortName>IGPD</shortName>
        <ecNumber>4.2.1.19</ecNumber>
    </recommendedName>
</protein>
<evidence type="ECO:0000305" key="1"/>
<feature type="chain" id="PRO_0000158239" description="Imidazoleglycerol-phosphate dehydratase">
    <location>
        <begin position="1"/>
        <end position="225"/>
    </location>
</feature>
<dbReference type="EC" id="4.2.1.19"/>
<dbReference type="EMBL" id="AF027980">
    <property type="protein sequence ID" value="AAB88888.1"/>
    <property type="status" value="ALT_FRAME"/>
    <property type="molecule type" value="Genomic_DNA"/>
</dbReference>
<dbReference type="EMBL" id="CM001233">
    <property type="protein sequence ID" value="EHA51634.1"/>
    <property type="molecule type" value="Genomic_DNA"/>
</dbReference>
<dbReference type="RefSeq" id="XP_003711441.1">
    <property type="nucleotide sequence ID" value="XM_003711393.1"/>
</dbReference>
<dbReference type="SMR" id="O42621"/>
<dbReference type="FunCoup" id="O42621">
    <property type="interactions" value="218"/>
</dbReference>
<dbReference type="STRING" id="242507.O42621"/>
<dbReference type="EnsemblFungi" id="MGG_07528T0">
    <property type="protein sequence ID" value="MGG_07528T0"/>
    <property type="gene ID" value="MGG_07528"/>
</dbReference>
<dbReference type="GeneID" id="2683448"/>
<dbReference type="KEGG" id="mgr:MGG_07528"/>
<dbReference type="VEuPathDB" id="FungiDB:MGG_07528"/>
<dbReference type="eggNOG" id="KOG3143">
    <property type="taxonomic scope" value="Eukaryota"/>
</dbReference>
<dbReference type="HOGENOM" id="CLU_044308_3_0_1"/>
<dbReference type="InParanoid" id="O42621"/>
<dbReference type="OMA" id="GIPFFDH"/>
<dbReference type="OrthoDB" id="447729at2759"/>
<dbReference type="UniPathway" id="UPA00031">
    <property type="reaction ID" value="UER00011"/>
</dbReference>
<dbReference type="PHI-base" id="PHI:121"/>
<dbReference type="Proteomes" id="UP000009058">
    <property type="component" value="Chromosome 3"/>
</dbReference>
<dbReference type="GO" id="GO:0004424">
    <property type="term" value="F:imidazoleglycerol-phosphate dehydratase activity"/>
    <property type="evidence" value="ECO:0007669"/>
    <property type="project" value="UniProtKB-EC"/>
</dbReference>
<dbReference type="GO" id="GO:0000105">
    <property type="term" value="P:L-histidine biosynthetic process"/>
    <property type="evidence" value="ECO:0007669"/>
    <property type="project" value="UniProtKB-UniPathway"/>
</dbReference>
<dbReference type="CDD" id="cd07914">
    <property type="entry name" value="IGPD"/>
    <property type="match status" value="1"/>
</dbReference>
<dbReference type="FunFam" id="3.30.230.40:FF:000005">
    <property type="entry name" value="Imidazoleglycerol-phosphate dehydratase"/>
    <property type="match status" value="1"/>
</dbReference>
<dbReference type="FunFam" id="3.30.230.40:FF:000001">
    <property type="entry name" value="Imidazoleglycerol-phosphate dehydratase HisB"/>
    <property type="match status" value="1"/>
</dbReference>
<dbReference type="Gene3D" id="3.30.230.40">
    <property type="entry name" value="Imidazole glycerol phosphate dehydratase, domain 1"/>
    <property type="match status" value="2"/>
</dbReference>
<dbReference type="HAMAP" id="MF_00076">
    <property type="entry name" value="HisB"/>
    <property type="match status" value="1"/>
</dbReference>
<dbReference type="InterPro" id="IPR038494">
    <property type="entry name" value="IGPD_sf"/>
</dbReference>
<dbReference type="InterPro" id="IPR000807">
    <property type="entry name" value="ImidazoleglycerolP_deHydtase"/>
</dbReference>
<dbReference type="InterPro" id="IPR020565">
    <property type="entry name" value="ImidazoleglycerP_deHydtase_CS"/>
</dbReference>
<dbReference type="InterPro" id="IPR020568">
    <property type="entry name" value="Ribosomal_Su5_D2-typ_SF"/>
</dbReference>
<dbReference type="PANTHER" id="PTHR23133:SF2">
    <property type="entry name" value="IMIDAZOLEGLYCEROL-PHOSPHATE DEHYDRATASE"/>
    <property type="match status" value="1"/>
</dbReference>
<dbReference type="PANTHER" id="PTHR23133">
    <property type="entry name" value="IMIDAZOLEGLYCEROL-PHOSPHATE DEHYDRATASE HIS7"/>
    <property type="match status" value="1"/>
</dbReference>
<dbReference type="Pfam" id="PF00475">
    <property type="entry name" value="IGPD"/>
    <property type="match status" value="1"/>
</dbReference>
<dbReference type="SUPFAM" id="SSF54211">
    <property type="entry name" value="Ribosomal protein S5 domain 2-like"/>
    <property type="match status" value="2"/>
</dbReference>
<dbReference type="PROSITE" id="PS00954">
    <property type="entry name" value="IGP_DEHYDRATASE_1"/>
    <property type="match status" value="1"/>
</dbReference>
<dbReference type="PROSITE" id="PS00955">
    <property type="entry name" value="IGP_DEHYDRATASE_2"/>
    <property type="match status" value="1"/>
</dbReference>
<proteinExistence type="inferred from homology"/>
<organism>
    <name type="scientific">Pyricularia oryzae (strain 70-15 / ATCC MYA-4617 / FGSC 8958)</name>
    <name type="common">Rice blast fungus</name>
    <name type="synonym">Magnaporthe oryzae</name>
    <dbReference type="NCBI Taxonomy" id="242507"/>
    <lineage>
        <taxon>Eukaryota</taxon>
        <taxon>Fungi</taxon>
        <taxon>Dikarya</taxon>
        <taxon>Ascomycota</taxon>
        <taxon>Pezizomycotina</taxon>
        <taxon>Sordariomycetes</taxon>
        <taxon>Sordariomycetidae</taxon>
        <taxon>Magnaporthales</taxon>
        <taxon>Pyriculariaceae</taxon>
        <taxon>Pyricularia</taxon>
    </lineage>
</organism>
<sequence>MASPRWAALARDTNETKVKLALSIDGGDLPPDTHPSLLEAAASGHASQSSSSQKISINTGIGFLDHMLHAFAKHAGFSLLLTCQGDLHIDDHHTAEDVCIALGDAFKTALGSAAGIARFGFAYCPLDEALSRAVVDVSNRPFAVVELGLRREKIGDLSCEMIPHCIMSFATAARLTIHVDCIRGENDHHRAESAFKALAVAVRTAVGKVAGREGEVPSTKGTLSV</sequence>